<feature type="chain" id="PRO_1000067073" description="UPF0248 protein MmarC7_1289">
    <location>
        <begin position="1"/>
        <end position="76"/>
    </location>
</feature>
<sequence>MLKELINKLLWHPDYNPEDYNITYLHRGAKNDEKAVPLKNIVIEDSFLVFDETHVPFHRILEIVNLKTGEILYKKR</sequence>
<dbReference type="EMBL" id="CP000745">
    <property type="protein sequence ID" value="ABR66352.1"/>
    <property type="molecule type" value="Genomic_DNA"/>
</dbReference>
<dbReference type="STRING" id="426368.MmarC7_1289"/>
<dbReference type="KEGG" id="mmz:MmarC7_1289"/>
<dbReference type="eggNOG" id="arCOG01302">
    <property type="taxonomic scope" value="Archaea"/>
</dbReference>
<dbReference type="HOGENOM" id="CLU_172276_3_1_2"/>
<dbReference type="OrthoDB" id="14794at2157"/>
<dbReference type="HAMAP" id="MF_01245">
    <property type="entry name" value="UPF0248"/>
    <property type="match status" value="1"/>
</dbReference>
<dbReference type="InterPro" id="IPR040459">
    <property type="entry name" value="MJ1316"/>
</dbReference>
<dbReference type="InterPro" id="IPR007547">
    <property type="entry name" value="UPF0248"/>
</dbReference>
<dbReference type="NCBIfam" id="NF003272">
    <property type="entry name" value="PRK04257.1"/>
    <property type="match status" value="1"/>
</dbReference>
<dbReference type="Pfam" id="PF04457">
    <property type="entry name" value="MJ1316"/>
    <property type="match status" value="1"/>
</dbReference>
<protein>
    <recommendedName>
        <fullName evidence="1">UPF0248 protein MmarC7_1289</fullName>
    </recommendedName>
</protein>
<reference key="1">
    <citation type="submission" date="2007-06" db="EMBL/GenBank/DDBJ databases">
        <title>Complete sequence of Methanococcus maripaludis C7.</title>
        <authorList>
            <consortium name="US DOE Joint Genome Institute"/>
            <person name="Copeland A."/>
            <person name="Lucas S."/>
            <person name="Lapidus A."/>
            <person name="Barry K."/>
            <person name="Glavina del Rio T."/>
            <person name="Dalin E."/>
            <person name="Tice H."/>
            <person name="Pitluck S."/>
            <person name="Clum A."/>
            <person name="Schmutz J."/>
            <person name="Larimer F."/>
            <person name="Land M."/>
            <person name="Hauser L."/>
            <person name="Kyrpides N."/>
            <person name="Anderson I."/>
            <person name="Sieprawska-Lupa M."/>
            <person name="Whitman W.B."/>
            <person name="Richardson P."/>
        </authorList>
    </citation>
    <scope>NUCLEOTIDE SEQUENCE [LARGE SCALE GENOMIC DNA]</scope>
    <source>
        <strain>C7 / ATCC BAA-1331</strain>
    </source>
</reference>
<comment type="similarity">
    <text evidence="1">Belongs to the UPF0248 family.</text>
</comment>
<accession>A6VIS6</accession>
<gene>
    <name type="ordered locus">MmarC7_1289</name>
</gene>
<organism>
    <name type="scientific">Methanococcus maripaludis (strain C7 / ATCC BAA-1331)</name>
    <dbReference type="NCBI Taxonomy" id="426368"/>
    <lineage>
        <taxon>Archaea</taxon>
        <taxon>Methanobacteriati</taxon>
        <taxon>Methanobacteriota</taxon>
        <taxon>Methanomada group</taxon>
        <taxon>Methanococci</taxon>
        <taxon>Methanococcales</taxon>
        <taxon>Methanococcaceae</taxon>
        <taxon>Methanococcus</taxon>
    </lineage>
</organism>
<proteinExistence type="inferred from homology"/>
<evidence type="ECO:0000255" key="1">
    <source>
        <dbReference type="HAMAP-Rule" id="MF_01245"/>
    </source>
</evidence>
<name>Y1289_METM7</name>